<sequence>MSIENLKSFDPFADTGDDEASSSNYIHIRIQQRNGRKTLTTVQGIPEEYDLKRILKVLRKDFGCNGNMVKDDEMGEIIQLQGDQRAKVCEFLITQLAIPKKNIKIHGF</sequence>
<dbReference type="EMBL" id="AE016819">
    <property type="protein sequence ID" value="AAS54013.2"/>
    <property type="molecule type" value="Genomic_DNA"/>
</dbReference>
<dbReference type="EMBL" id="AE016817">
    <property type="protein sequence ID" value="AAS51525.1"/>
    <property type="molecule type" value="Genomic_DNA"/>
</dbReference>
<dbReference type="EMBL" id="AE016818">
    <property type="protein sequence ID" value="AAS53136.1"/>
    <property type="molecule type" value="Genomic_DNA"/>
</dbReference>
<dbReference type="RefSeq" id="NP_983701.1">
    <property type="nucleotide sequence ID" value="NM_209054.1"/>
</dbReference>
<dbReference type="RefSeq" id="NP_985312.1">
    <property type="nucleotide sequence ID" value="NM_210666.1"/>
</dbReference>
<dbReference type="RefSeq" id="NP_986189.2">
    <property type="nucleotide sequence ID" value="NM_212325.2"/>
</dbReference>
<dbReference type="RefSeq" id="XP_002999503.1">
    <property type="nucleotide sequence ID" value="XM_002999457.1"/>
</dbReference>
<dbReference type="SMR" id="Q755R1"/>
<dbReference type="FunCoup" id="Q755R1">
    <property type="interactions" value="778"/>
</dbReference>
<dbReference type="STRING" id="284811.Q755R1"/>
<dbReference type="EnsemblFungi" id="AAS51525">
    <property type="protein sequence ID" value="AAS51525"/>
    <property type="gene ID" value="AGOS_ADL395C"/>
</dbReference>
<dbReference type="EnsemblFungi" id="AAS53136">
    <property type="protein sequence ID" value="AAS53136"/>
    <property type="gene ID" value="AGOS_AER457W"/>
</dbReference>
<dbReference type="EnsemblFungi" id="AAS54013">
    <property type="protein sequence ID" value="AAS54013"/>
    <property type="gene ID" value="AGOS_AFR642C"/>
</dbReference>
<dbReference type="EnsemblFungi" id="ADJ41799">
    <property type="protein sequence ID" value="ADJ41799"/>
    <property type="gene ID" value="AGOS_AFR752W"/>
</dbReference>
<dbReference type="GeneID" id="4619834"/>
<dbReference type="GeneID" id="4621533"/>
<dbReference type="GeneID" id="4622477"/>
<dbReference type="KEGG" id="ago:AGOS_ADL395C"/>
<dbReference type="KEGG" id="ago:AGOS_AER457W"/>
<dbReference type="KEGG" id="ago:AGOS_AFR642C"/>
<dbReference type="KEGG" id="ago:AGOS_AFR752W"/>
<dbReference type="eggNOG" id="KOG1770">
    <property type="taxonomic scope" value="Eukaryota"/>
</dbReference>
<dbReference type="HOGENOM" id="CLU_082805_3_2_1"/>
<dbReference type="InParanoid" id="Q755R1"/>
<dbReference type="OMA" id="CEFMITQ"/>
<dbReference type="OrthoDB" id="10248435at2759"/>
<dbReference type="Proteomes" id="UP000000591">
    <property type="component" value="Chromosome IV"/>
</dbReference>
<dbReference type="Proteomes" id="UP000000591">
    <property type="component" value="Chromosome V"/>
</dbReference>
<dbReference type="Proteomes" id="UP000000591">
    <property type="component" value="Chromosome VI"/>
</dbReference>
<dbReference type="GO" id="GO:0016282">
    <property type="term" value="C:eukaryotic 43S preinitiation complex"/>
    <property type="evidence" value="ECO:0000318"/>
    <property type="project" value="GO_Central"/>
</dbReference>
<dbReference type="GO" id="GO:0043024">
    <property type="term" value="F:ribosomal small subunit binding"/>
    <property type="evidence" value="ECO:0000318"/>
    <property type="project" value="GO_Central"/>
</dbReference>
<dbReference type="GO" id="GO:0003723">
    <property type="term" value="F:RNA binding"/>
    <property type="evidence" value="ECO:0000318"/>
    <property type="project" value="GO_Central"/>
</dbReference>
<dbReference type="GO" id="GO:0003743">
    <property type="term" value="F:translation initiation factor activity"/>
    <property type="evidence" value="ECO:0000318"/>
    <property type="project" value="GO_Central"/>
</dbReference>
<dbReference type="GO" id="GO:0006417">
    <property type="term" value="P:regulation of translation"/>
    <property type="evidence" value="ECO:0007669"/>
    <property type="project" value="UniProtKB-KW"/>
</dbReference>
<dbReference type="CDD" id="cd11566">
    <property type="entry name" value="eIF1_SUI1"/>
    <property type="match status" value="1"/>
</dbReference>
<dbReference type="FunFam" id="3.30.780.10:FF:000005">
    <property type="entry name" value="Sui1 translation initiation factor"/>
    <property type="match status" value="1"/>
</dbReference>
<dbReference type="Gene3D" id="3.30.780.10">
    <property type="entry name" value="SUI1-like domain"/>
    <property type="match status" value="1"/>
</dbReference>
<dbReference type="InterPro" id="IPR001950">
    <property type="entry name" value="SUI1"/>
</dbReference>
<dbReference type="InterPro" id="IPR036877">
    <property type="entry name" value="SUI1_dom_sf"/>
</dbReference>
<dbReference type="InterPro" id="IPR005874">
    <property type="entry name" value="SUI1_euk"/>
</dbReference>
<dbReference type="NCBIfam" id="TIGR01160">
    <property type="entry name" value="SUI1_MOF2"/>
    <property type="match status" value="1"/>
</dbReference>
<dbReference type="PANTHER" id="PTHR10388">
    <property type="entry name" value="EUKARYOTIC TRANSLATION INITIATION FACTOR SUI1"/>
    <property type="match status" value="1"/>
</dbReference>
<dbReference type="Pfam" id="PF01253">
    <property type="entry name" value="SUI1"/>
    <property type="match status" value="1"/>
</dbReference>
<dbReference type="PIRSF" id="PIRSF004499">
    <property type="entry name" value="SUI1_euk"/>
    <property type="match status" value="1"/>
</dbReference>
<dbReference type="SUPFAM" id="SSF55159">
    <property type="entry name" value="eIF1-like"/>
    <property type="match status" value="1"/>
</dbReference>
<dbReference type="PROSITE" id="PS50296">
    <property type="entry name" value="SUI1"/>
    <property type="match status" value="1"/>
</dbReference>
<keyword id="KW-0648">Protein biosynthesis</keyword>
<keyword id="KW-1185">Reference proteome</keyword>
<keyword id="KW-0810">Translation regulation</keyword>
<proteinExistence type="inferred from homology"/>
<name>SUI1_EREGS</name>
<accession>Q755R1</accession>
<accession>Q752D4</accession>
<gene>
    <name type="primary">SUI1A</name>
    <name type="ordered locus">ADL395C</name>
</gene>
<gene>
    <name type="primary">SUI1B</name>
    <name type="ordered locus">AER457W</name>
</gene>
<gene>
    <name type="primary">SUI1C</name>
    <name type="ordered locus">AFR642C</name>
</gene>
<protein>
    <recommendedName>
        <fullName>Protein translation factor SUI1</fullName>
    </recommendedName>
</protein>
<reference key="1">
    <citation type="journal article" date="2004" name="Science">
        <title>The Ashbya gossypii genome as a tool for mapping the ancient Saccharomyces cerevisiae genome.</title>
        <authorList>
            <person name="Dietrich F.S."/>
            <person name="Voegeli S."/>
            <person name="Brachat S."/>
            <person name="Lerch A."/>
            <person name="Gates K."/>
            <person name="Steiner S."/>
            <person name="Mohr C."/>
            <person name="Poehlmann R."/>
            <person name="Luedi P."/>
            <person name="Choi S."/>
            <person name="Wing R.A."/>
            <person name="Flavier A."/>
            <person name="Gaffney T.D."/>
            <person name="Philippsen P."/>
        </authorList>
    </citation>
    <scope>NUCLEOTIDE SEQUENCE [LARGE SCALE GENOMIC DNA]</scope>
    <source>
        <strain>ATCC 10895 / CBS 109.51 / FGSC 9923 / NRRL Y-1056</strain>
    </source>
</reference>
<reference key="2">
    <citation type="journal article" date="2013" name="G3 (Bethesda)">
        <title>Genomes of Ashbya fungi isolated from insects reveal four mating-type loci, numerous translocations, lack of transposons, and distinct gene duplications.</title>
        <authorList>
            <person name="Dietrich F.S."/>
            <person name="Voegeli S."/>
            <person name="Kuo S."/>
            <person name="Philippsen P."/>
        </authorList>
    </citation>
    <scope>GENOME REANNOTATION</scope>
    <source>
        <strain>ATCC 10895 / CBS 109.51 / FGSC 9923 / NRRL Y-1056</strain>
    </source>
</reference>
<feature type="chain" id="PRO_0000130564" description="Protein translation factor SUI1">
    <location>
        <begin position="1"/>
        <end position="108"/>
    </location>
</feature>
<feature type="region of interest" description="Disordered" evidence="2">
    <location>
        <begin position="1"/>
        <end position="20"/>
    </location>
</feature>
<organism>
    <name type="scientific">Eremothecium gossypii (strain ATCC 10895 / CBS 109.51 / FGSC 9923 / NRRL Y-1056)</name>
    <name type="common">Yeast</name>
    <name type="synonym">Ashbya gossypii</name>
    <dbReference type="NCBI Taxonomy" id="284811"/>
    <lineage>
        <taxon>Eukaryota</taxon>
        <taxon>Fungi</taxon>
        <taxon>Dikarya</taxon>
        <taxon>Ascomycota</taxon>
        <taxon>Saccharomycotina</taxon>
        <taxon>Saccharomycetes</taxon>
        <taxon>Saccharomycetales</taxon>
        <taxon>Saccharomycetaceae</taxon>
        <taxon>Eremothecium</taxon>
    </lineage>
</organism>
<evidence type="ECO:0000250" key="1"/>
<evidence type="ECO:0000256" key="2">
    <source>
        <dbReference type="SAM" id="MobiDB-lite"/>
    </source>
</evidence>
<evidence type="ECO:0000305" key="3"/>
<comment type="function">
    <text evidence="1">Additional factor that functions in concert with eIF-2 and the initiator tRNA in directing the ribosome to the proper start site of translation.</text>
</comment>
<comment type="similarity">
    <text evidence="3">Belongs to the SUI1 family.</text>
</comment>